<accession>A9R015</accession>
<reference key="1">
    <citation type="journal article" date="2010" name="J. Bacteriol.">
        <title>Genome sequence of the deep-rooted Yersinia pestis strain Angola reveals new insights into the evolution and pangenome of the plague bacterium.</title>
        <authorList>
            <person name="Eppinger M."/>
            <person name="Worsham P.L."/>
            <person name="Nikolich M.P."/>
            <person name="Riley D.R."/>
            <person name="Sebastian Y."/>
            <person name="Mou S."/>
            <person name="Achtman M."/>
            <person name="Lindler L.E."/>
            <person name="Ravel J."/>
        </authorList>
    </citation>
    <scope>NUCLEOTIDE SEQUENCE [LARGE SCALE GENOMIC DNA]</scope>
    <source>
        <strain>Angola</strain>
    </source>
</reference>
<dbReference type="EMBL" id="CP000901">
    <property type="protein sequence ID" value="ABX88375.1"/>
    <property type="molecule type" value="Genomic_DNA"/>
</dbReference>
<dbReference type="RefSeq" id="WP_002209248.1">
    <property type="nucleotide sequence ID" value="NZ_CP009935.1"/>
</dbReference>
<dbReference type="SMR" id="A9R015"/>
<dbReference type="GeneID" id="57974141"/>
<dbReference type="KEGG" id="ypg:YpAngola_A0797"/>
<dbReference type="PATRIC" id="fig|349746.12.peg.1746"/>
<dbReference type="GO" id="GO:0005524">
    <property type="term" value="F:ATP binding"/>
    <property type="evidence" value="ECO:0007669"/>
    <property type="project" value="UniProtKB-UniRule"/>
</dbReference>
<dbReference type="GO" id="GO:0140662">
    <property type="term" value="F:ATP-dependent protein folding chaperone"/>
    <property type="evidence" value="ECO:0007669"/>
    <property type="project" value="InterPro"/>
</dbReference>
<dbReference type="GO" id="GO:0051082">
    <property type="term" value="F:unfolded protein binding"/>
    <property type="evidence" value="ECO:0007669"/>
    <property type="project" value="InterPro"/>
</dbReference>
<dbReference type="CDD" id="cd10234">
    <property type="entry name" value="ASKHA_NBD_HSP70_DnaK-like"/>
    <property type="match status" value="1"/>
</dbReference>
<dbReference type="FunFam" id="2.60.34.10:FF:000014">
    <property type="entry name" value="Chaperone protein DnaK HSP70"/>
    <property type="match status" value="1"/>
</dbReference>
<dbReference type="FunFam" id="3.30.30.30:FF:000003">
    <property type="entry name" value="Heat shock protein 9"/>
    <property type="match status" value="1"/>
</dbReference>
<dbReference type="FunFam" id="1.20.1270.10:FF:000001">
    <property type="entry name" value="Molecular chaperone DnaK"/>
    <property type="match status" value="1"/>
</dbReference>
<dbReference type="FunFam" id="3.30.420.40:FF:000004">
    <property type="entry name" value="Molecular chaperone DnaK"/>
    <property type="match status" value="1"/>
</dbReference>
<dbReference type="FunFam" id="3.90.640.10:FF:000003">
    <property type="entry name" value="Molecular chaperone DnaK"/>
    <property type="match status" value="1"/>
</dbReference>
<dbReference type="Gene3D" id="1.20.1270.10">
    <property type="match status" value="1"/>
</dbReference>
<dbReference type="Gene3D" id="3.30.420.40">
    <property type="match status" value="2"/>
</dbReference>
<dbReference type="Gene3D" id="3.90.640.10">
    <property type="entry name" value="Actin, Chain A, domain 4"/>
    <property type="match status" value="1"/>
</dbReference>
<dbReference type="Gene3D" id="2.60.34.10">
    <property type="entry name" value="Substrate Binding Domain Of DNAk, Chain A, domain 1"/>
    <property type="match status" value="1"/>
</dbReference>
<dbReference type="HAMAP" id="MF_00332">
    <property type="entry name" value="DnaK"/>
    <property type="match status" value="1"/>
</dbReference>
<dbReference type="InterPro" id="IPR043129">
    <property type="entry name" value="ATPase_NBD"/>
</dbReference>
<dbReference type="InterPro" id="IPR012725">
    <property type="entry name" value="Chaperone_DnaK"/>
</dbReference>
<dbReference type="InterPro" id="IPR018181">
    <property type="entry name" value="Heat_shock_70_CS"/>
</dbReference>
<dbReference type="InterPro" id="IPR029048">
    <property type="entry name" value="HSP70_C_sf"/>
</dbReference>
<dbReference type="InterPro" id="IPR029047">
    <property type="entry name" value="HSP70_peptide-bd_sf"/>
</dbReference>
<dbReference type="InterPro" id="IPR013126">
    <property type="entry name" value="Hsp_70_fam"/>
</dbReference>
<dbReference type="NCBIfam" id="NF001413">
    <property type="entry name" value="PRK00290.1"/>
    <property type="match status" value="1"/>
</dbReference>
<dbReference type="NCBIfam" id="NF003520">
    <property type="entry name" value="PRK05183.1"/>
    <property type="match status" value="1"/>
</dbReference>
<dbReference type="NCBIfam" id="TIGR02350">
    <property type="entry name" value="prok_dnaK"/>
    <property type="match status" value="1"/>
</dbReference>
<dbReference type="PANTHER" id="PTHR19375">
    <property type="entry name" value="HEAT SHOCK PROTEIN 70KDA"/>
    <property type="match status" value="1"/>
</dbReference>
<dbReference type="Pfam" id="PF00012">
    <property type="entry name" value="HSP70"/>
    <property type="match status" value="1"/>
</dbReference>
<dbReference type="PRINTS" id="PR00301">
    <property type="entry name" value="HEATSHOCK70"/>
</dbReference>
<dbReference type="SUPFAM" id="SSF53067">
    <property type="entry name" value="Actin-like ATPase domain"/>
    <property type="match status" value="2"/>
</dbReference>
<dbReference type="SUPFAM" id="SSF100934">
    <property type="entry name" value="Heat shock protein 70kD (HSP70), C-terminal subdomain"/>
    <property type="match status" value="1"/>
</dbReference>
<dbReference type="SUPFAM" id="SSF100920">
    <property type="entry name" value="Heat shock protein 70kD (HSP70), peptide-binding domain"/>
    <property type="match status" value="1"/>
</dbReference>
<dbReference type="PROSITE" id="PS00297">
    <property type="entry name" value="HSP70_1"/>
    <property type="match status" value="1"/>
</dbReference>
<dbReference type="PROSITE" id="PS00329">
    <property type="entry name" value="HSP70_2"/>
    <property type="match status" value="1"/>
</dbReference>
<dbReference type="PROSITE" id="PS01036">
    <property type="entry name" value="HSP70_3"/>
    <property type="match status" value="1"/>
</dbReference>
<gene>
    <name evidence="1" type="primary">dnaK</name>
    <name type="ordered locus">YpAngola_A0797</name>
</gene>
<keyword id="KW-0067">ATP-binding</keyword>
<keyword id="KW-0143">Chaperone</keyword>
<keyword id="KW-0547">Nucleotide-binding</keyword>
<keyword id="KW-0597">Phosphoprotein</keyword>
<keyword id="KW-0346">Stress response</keyword>
<evidence type="ECO:0000255" key="1">
    <source>
        <dbReference type="HAMAP-Rule" id="MF_00332"/>
    </source>
</evidence>
<evidence type="ECO:0000256" key="2">
    <source>
        <dbReference type="SAM" id="MobiDB-lite"/>
    </source>
</evidence>
<name>DNAK_YERPG</name>
<sequence>MGKIIGIDLGTTNSCVAIMDGTKARVLENSEGDRTTPSIIAYTQDGETLVGQPAKRQAVTNPQNTLFAIKRLIGRRFQDEEAQRDKDIMPYKIIAADNGDAWLEVKGQKMAPPQISAEVLKKMKKTAEDYLGEPVTEAVITVPAYFNDAQRQATKDAGRIAGLEVKRIINEPTAAALAYGLDKEVGNRTIAVYDLGGGTFDISIIEIDEVDGEKTFEVLATNGDTHLGGEDFDSRLINYLVEEFKKDQGMDLRTDPLAMQRLKEAAEKAKIELSSAQQTDVNLPYITADGSGPKHMNIKVTRAKLESLVEDLVNRSIEPLKVALQDAGLSVSDIQDVILVGGQTRMPMVQKKVADFFGKEPRKDVNPDEAVAIGAAVQGGVLSGEVKDVLLLDVTPLSLGIETMGGVMTPLITKNTTIPTKHSQVFSTAEDNQSAVTIHVLQGERKRAQDNKSLGQFNLDGIQPAPRGMAQIEVTFDIDADGILHVSAKDKNTGREQKITIKASSGLNEEEIQKMVRDAEANAEADRKFEELVQTRNQADHLIHGTRKQLEEAGDKLPAEDKTAIEEAMKGLEAALKGEDKAEIEAKTQALVQVSGKLLEMAQQQQAAAGGDAGDTSAKKEDDVVDAEFEEVKDKK</sequence>
<comment type="function">
    <text evidence="1">Acts as a chaperone.</text>
</comment>
<comment type="induction">
    <text evidence="1">By stress conditions e.g. heat shock.</text>
</comment>
<comment type="similarity">
    <text evidence="1">Belongs to the heat shock protein 70 family.</text>
</comment>
<feature type="chain" id="PRO_1000119782" description="Chaperone protein DnaK">
    <location>
        <begin position="1"/>
        <end position="636"/>
    </location>
</feature>
<feature type="region of interest" description="Disordered" evidence="2">
    <location>
        <begin position="603"/>
        <end position="636"/>
    </location>
</feature>
<feature type="modified residue" description="Phosphothreonine; by autocatalysis" evidence="1">
    <location>
        <position position="199"/>
    </location>
</feature>
<protein>
    <recommendedName>
        <fullName evidence="1">Chaperone protein DnaK</fullName>
    </recommendedName>
    <alternativeName>
        <fullName evidence="1">HSP70</fullName>
    </alternativeName>
    <alternativeName>
        <fullName evidence="1">Heat shock 70 kDa protein</fullName>
    </alternativeName>
    <alternativeName>
        <fullName evidence="1">Heat shock protein 70</fullName>
    </alternativeName>
</protein>
<organism>
    <name type="scientific">Yersinia pestis bv. Antiqua (strain Angola)</name>
    <dbReference type="NCBI Taxonomy" id="349746"/>
    <lineage>
        <taxon>Bacteria</taxon>
        <taxon>Pseudomonadati</taxon>
        <taxon>Pseudomonadota</taxon>
        <taxon>Gammaproteobacteria</taxon>
        <taxon>Enterobacterales</taxon>
        <taxon>Yersiniaceae</taxon>
        <taxon>Yersinia</taxon>
    </lineage>
</organism>
<proteinExistence type="inferred from homology"/>